<sequence>MESENILEAKQVSVAFRIAGKFQKAIYDIDLSLRRGEVLAIVGESGSGKSTLATAVMGLHNPNQTQITGSILLDEEEVIGKTGDSMASIRGSKVGMIFQNPLTALNPLMKIGQQIKEMLAVHDVYPENQYESRIFQLLEQVGIPNPKRVVNQFPHQLSGGMRQRVMIAIAIANDPDLIIADEPTTALDVTIQAQILDLILEIQKKKNAGVILITHDLGVVAEVADTVAVMYAGQLVEKASVEELFQNPKHPYTRSLLRSNPSAETVSDDLYVIPGSVPSLSEIEYDKDLFLARVPWMKEEAQKVISEKMTEISSNHFVRGQAWKKFEFPDQKLKGGKK</sequence>
<dbReference type="EC" id="7.4.2.6" evidence="2"/>
<dbReference type="EMBL" id="U09553">
    <property type="protein sequence ID" value="AAB00533.1"/>
    <property type="molecule type" value="Unassigned_DNA"/>
</dbReference>
<dbReference type="EMBL" id="CP000429">
    <property type="protein sequence ID" value="ABJ74117.1"/>
    <property type="molecule type" value="Genomic_DNA"/>
</dbReference>
<dbReference type="RefSeq" id="WP_011669112.1">
    <property type="nucleotide sequence ID" value="NC_008506.1"/>
</dbReference>
<dbReference type="SMR" id="P50980"/>
<dbReference type="KEGG" id="llc:LACR_D21"/>
<dbReference type="HOGENOM" id="CLU_000604_1_23_9"/>
<dbReference type="Proteomes" id="UP000000240">
    <property type="component" value="Plasmid pLACR4"/>
</dbReference>
<dbReference type="GO" id="GO:0005886">
    <property type="term" value="C:plasma membrane"/>
    <property type="evidence" value="ECO:0007669"/>
    <property type="project" value="UniProtKB-SubCell"/>
</dbReference>
<dbReference type="GO" id="GO:0005524">
    <property type="term" value="F:ATP binding"/>
    <property type="evidence" value="ECO:0007669"/>
    <property type="project" value="UniProtKB-KW"/>
</dbReference>
<dbReference type="GO" id="GO:0016887">
    <property type="term" value="F:ATP hydrolysis activity"/>
    <property type="evidence" value="ECO:0007669"/>
    <property type="project" value="InterPro"/>
</dbReference>
<dbReference type="GO" id="GO:0015833">
    <property type="term" value="P:peptide transport"/>
    <property type="evidence" value="ECO:0007669"/>
    <property type="project" value="UniProtKB-KW"/>
</dbReference>
<dbReference type="GO" id="GO:0015031">
    <property type="term" value="P:protein transport"/>
    <property type="evidence" value="ECO:0007669"/>
    <property type="project" value="UniProtKB-KW"/>
</dbReference>
<dbReference type="CDD" id="cd03257">
    <property type="entry name" value="ABC_NikE_OppD_transporters"/>
    <property type="match status" value="1"/>
</dbReference>
<dbReference type="FunFam" id="3.40.50.300:FF:000016">
    <property type="entry name" value="Oligopeptide ABC transporter ATP-binding component"/>
    <property type="match status" value="1"/>
</dbReference>
<dbReference type="Gene3D" id="3.40.50.300">
    <property type="entry name" value="P-loop containing nucleotide triphosphate hydrolases"/>
    <property type="match status" value="1"/>
</dbReference>
<dbReference type="InterPro" id="IPR003593">
    <property type="entry name" value="AAA+_ATPase"/>
</dbReference>
<dbReference type="InterPro" id="IPR050388">
    <property type="entry name" value="ABC_Ni/Peptide_Import"/>
</dbReference>
<dbReference type="InterPro" id="IPR003439">
    <property type="entry name" value="ABC_transporter-like_ATP-bd"/>
</dbReference>
<dbReference type="InterPro" id="IPR017871">
    <property type="entry name" value="ABC_transporter-like_CS"/>
</dbReference>
<dbReference type="InterPro" id="IPR013563">
    <property type="entry name" value="Oligopep_ABC_C"/>
</dbReference>
<dbReference type="InterPro" id="IPR027417">
    <property type="entry name" value="P-loop_NTPase"/>
</dbReference>
<dbReference type="NCBIfam" id="TIGR01727">
    <property type="entry name" value="oligo_HPY"/>
    <property type="match status" value="1"/>
</dbReference>
<dbReference type="PANTHER" id="PTHR43297:SF2">
    <property type="entry name" value="DIPEPTIDE TRANSPORT ATP-BINDING PROTEIN DPPD"/>
    <property type="match status" value="1"/>
</dbReference>
<dbReference type="PANTHER" id="PTHR43297">
    <property type="entry name" value="OLIGOPEPTIDE TRANSPORT ATP-BINDING PROTEIN APPD"/>
    <property type="match status" value="1"/>
</dbReference>
<dbReference type="Pfam" id="PF00005">
    <property type="entry name" value="ABC_tran"/>
    <property type="match status" value="1"/>
</dbReference>
<dbReference type="Pfam" id="PF08352">
    <property type="entry name" value="oligo_HPY"/>
    <property type="match status" value="1"/>
</dbReference>
<dbReference type="SMART" id="SM00382">
    <property type="entry name" value="AAA"/>
    <property type="match status" value="1"/>
</dbReference>
<dbReference type="SUPFAM" id="SSF52540">
    <property type="entry name" value="P-loop containing nucleoside triphosphate hydrolases"/>
    <property type="match status" value="1"/>
</dbReference>
<dbReference type="PROSITE" id="PS00211">
    <property type="entry name" value="ABC_TRANSPORTER_1"/>
    <property type="match status" value="1"/>
</dbReference>
<dbReference type="PROSITE" id="PS50893">
    <property type="entry name" value="ABC_TRANSPORTER_2"/>
    <property type="match status" value="1"/>
</dbReference>
<proteinExistence type="inferred from homology"/>
<reference key="1">
    <citation type="journal article" date="1995" name="Dev. Biol. Stand.">
        <title>Plasmid-mediated oligopeptide transport system in lactococci.</title>
        <authorList>
            <person name="Yu W."/>
            <person name="Gillies K."/>
            <person name="Kondo J.K."/>
            <person name="Broadbent J.R."/>
            <person name="McKay L.L."/>
        </authorList>
    </citation>
    <scope>NUCLEOTIDE SEQUENCE [GENOMIC DNA]</scope>
    <source>
        <plasmid>pSK11L</plasmid>
    </source>
</reference>
<reference key="2">
    <citation type="journal article" date="2006" name="Proc. Natl. Acad. Sci. U.S.A.">
        <title>Comparative genomics of the lactic acid bacteria.</title>
        <authorList>
            <person name="Makarova K.S."/>
            <person name="Slesarev A."/>
            <person name="Wolf Y.I."/>
            <person name="Sorokin A."/>
            <person name="Mirkin B."/>
            <person name="Koonin E.V."/>
            <person name="Pavlov A."/>
            <person name="Pavlova N."/>
            <person name="Karamychev V."/>
            <person name="Polouchine N."/>
            <person name="Shakhova V."/>
            <person name="Grigoriev I."/>
            <person name="Lou Y."/>
            <person name="Rohksar D."/>
            <person name="Lucas S."/>
            <person name="Huang K."/>
            <person name="Goodstein D.M."/>
            <person name="Hawkins T."/>
            <person name="Plengvidhya V."/>
            <person name="Welker D."/>
            <person name="Hughes J."/>
            <person name="Goh Y."/>
            <person name="Benson A."/>
            <person name="Baldwin K."/>
            <person name="Lee J.-H."/>
            <person name="Diaz-Muniz I."/>
            <person name="Dosti B."/>
            <person name="Smeianov V."/>
            <person name="Wechter W."/>
            <person name="Barabote R."/>
            <person name="Lorca G."/>
            <person name="Altermann E."/>
            <person name="Barrangou R."/>
            <person name="Ganesan B."/>
            <person name="Xie Y."/>
            <person name="Rawsthorne H."/>
            <person name="Tamir D."/>
            <person name="Parker C."/>
            <person name="Breidt F."/>
            <person name="Broadbent J.R."/>
            <person name="Hutkins R."/>
            <person name="O'Sullivan D."/>
            <person name="Steele J."/>
            <person name="Unlu G."/>
            <person name="Saier M.H. Jr."/>
            <person name="Klaenhammer T."/>
            <person name="Richardson P."/>
            <person name="Kozyavkin S."/>
            <person name="Weimer B.C."/>
            <person name="Mills D.A."/>
        </authorList>
    </citation>
    <scope>NUCLEOTIDE SEQUENCE [LARGE SCALE GENOMIC DNA]</scope>
    <source>
        <strain>SK11</strain>
        <plasmid>pLACR4</plasmid>
    </source>
</reference>
<protein>
    <recommendedName>
        <fullName evidence="5">Oligopeptide transport ATP-binding protein OppD</fullName>
        <ecNumber evidence="2">7.4.2.6</ecNumber>
    </recommendedName>
</protein>
<keyword id="KW-0067">ATP-binding</keyword>
<keyword id="KW-1003">Cell membrane</keyword>
<keyword id="KW-0472">Membrane</keyword>
<keyword id="KW-0547">Nucleotide-binding</keyword>
<keyword id="KW-0571">Peptide transport</keyword>
<keyword id="KW-0614">Plasmid</keyword>
<keyword id="KW-0653">Protein transport</keyword>
<keyword id="KW-1278">Translocase</keyword>
<keyword id="KW-0813">Transport</keyword>
<comment type="function">
    <text evidence="2">Part of the ABC transporter complex OppABCDF involved in the uptake of oligopeptides (By similarity). Probably responsible for energy coupling to the transport system (By similarity). Essential for uptake of peptides larger than three amino acids and for growth in milk (By similarity).</text>
</comment>
<comment type="catalytic activity">
    <reaction evidence="2">
        <text>a [peptide](out) + ATP + H2O = a [peptide](in) + ADP + phosphate + H(+)</text>
        <dbReference type="Rhea" id="RHEA:78459"/>
        <dbReference type="Rhea" id="RHEA-COMP:19083"/>
        <dbReference type="ChEBI" id="CHEBI:15377"/>
        <dbReference type="ChEBI" id="CHEBI:15378"/>
        <dbReference type="ChEBI" id="CHEBI:30616"/>
        <dbReference type="ChEBI" id="CHEBI:33710"/>
        <dbReference type="ChEBI" id="CHEBI:43474"/>
        <dbReference type="ChEBI" id="CHEBI:456216"/>
        <dbReference type="EC" id="7.4.2.6"/>
    </reaction>
    <physiologicalReaction direction="left-to-right" evidence="2">
        <dbReference type="Rhea" id="RHEA:78460"/>
    </physiologicalReaction>
</comment>
<comment type="subunit">
    <text evidence="2">The complex is composed of two ATP-binding proteins (OppD and OppF), two transmembrane proteins (OppB and OppC) and a solute-binding protein (OppA).</text>
</comment>
<comment type="subcellular location">
    <subcellularLocation>
        <location evidence="1">Cell membrane</location>
        <topology evidence="1">Peripheral membrane protein</topology>
    </subcellularLocation>
</comment>
<comment type="similarity">
    <text evidence="5">Belongs to the ABC transporter superfamily.</text>
</comment>
<evidence type="ECO:0000250" key="1">
    <source>
        <dbReference type="UniProtKB" id="P24136"/>
    </source>
</evidence>
<evidence type="ECO:0000250" key="2">
    <source>
        <dbReference type="UniProtKB" id="Q07733"/>
    </source>
</evidence>
<evidence type="ECO:0000255" key="3">
    <source>
        <dbReference type="PROSITE-ProRule" id="PRU00434"/>
    </source>
</evidence>
<evidence type="ECO:0000303" key="4">
    <source>
    </source>
</evidence>
<evidence type="ECO:0000305" key="5"/>
<geneLocation type="plasmid">
    <name>pSK11L</name>
</geneLocation>
<geneLocation type="plasmid">
    <name>pLACR4</name>
</geneLocation>
<feature type="chain" id="PRO_0000092655" description="Oligopeptide transport ATP-binding protein OppD">
    <location>
        <begin position="1"/>
        <end position="338"/>
    </location>
</feature>
<feature type="domain" description="ABC transporter" evidence="3">
    <location>
        <begin position="7"/>
        <end position="257"/>
    </location>
</feature>
<feature type="binding site" evidence="3">
    <location>
        <begin position="43"/>
        <end position="50"/>
    </location>
    <ligand>
        <name>ATP</name>
        <dbReference type="ChEBI" id="CHEBI:30616"/>
    </ligand>
</feature>
<accession>P50980</accession>
<accession>Q02VA5</accession>
<gene>
    <name evidence="4" type="primary">oppD</name>
    <name type="ordered locus">LACR_D21</name>
</gene>
<name>OPPD_LACLS</name>
<organism>
    <name type="scientific">Lactococcus lactis subsp. cremoris (strain SK11)</name>
    <dbReference type="NCBI Taxonomy" id="272622"/>
    <lineage>
        <taxon>Bacteria</taxon>
        <taxon>Bacillati</taxon>
        <taxon>Bacillota</taxon>
        <taxon>Bacilli</taxon>
        <taxon>Lactobacillales</taxon>
        <taxon>Streptococcaceae</taxon>
        <taxon>Lactococcus</taxon>
        <taxon>Lactococcus cremoris subsp. cremoris</taxon>
    </lineage>
</organism>